<dbReference type="EMBL" id="AC005623">
    <property type="protein sequence ID" value="AAC77865.1"/>
    <property type="status" value="ALT_SEQ"/>
    <property type="molecule type" value="Genomic_DNA"/>
</dbReference>
<dbReference type="EMBL" id="CP002685">
    <property type="protein sequence ID" value="AEC07932.2"/>
    <property type="molecule type" value="Genomic_DNA"/>
</dbReference>
<dbReference type="PIR" id="D84668">
    <property type="entry name" value="D84668"/>
</dbReference>
<dbReference type="RefSeq" id="NP_001318296.1">
    <property type="nucleotide sequence ID" value="NM_001336100.1"/>
</dbReference>
<dbReference type="SMR" id="Q9ZVD3"/>
<dbReference type="BioGRID" id="2601">
    <property type="interactions" value="1"/>
</dbReference>
<dbReference type="FunCoup" id="Q9ZVD3">
    <property type="interactions" value="290"/>
</dbReference>
<dbReference type="STRING" id="3702.Q9ZVD3"/>
<dbReference type="iPTMnet" id="Q9ZVD3"/>
<dbReference type="PaxDb" id="3702-AT2G27070.1"/>
<dbReference type="ProteomicsDB" id="246896"/>
<dbReference type="EnsemblPlants" id="AT2G27070.1">
    <property type="protein sequence ID" value="AT2G27070.1"/>
    <property type="gene ID" value="AT2G27070"/>
</dbReference>
<dbReference type="GeneID" id="817249"/>
<dbReference type="Gramene" id="AT2G27070.1">
    <property type="protein sequence ID" value="AT2G27070.1"/>
    <property type="gene ID" value="AT2G27070"/>
</dbReference>
<dbReference type="KEGG" id="ath:AT2G27070"/>
<dbReference type="Araport" id="AT2G27070"/>
<dbReference type="TAIR" id="AT2G27070">
    <property type="gene designation" value="RR13"/>
</dbReference>
<dbReference type="eggNOG" id="KOG1601">
    <property type="taxonomic scope" value="Eukaryota"/>
</dbReference>
<dbReference type="HOGENOM" id="CLU_387641_0_0_1"/>
<dbReference type="InParanoid" id="Q9ZVD3"/>
<dbReference type="OMA" id="FFPEQDN"/>
<dbReference type="PhylomeDB" id="Q9ZVD3"/>
<dbReference type="PRO" id="PR:Q9ZVD3"/>
<dbReference type="Proteomes" id="UP000006548">
    <property type="component" value="Chromosome 2"/>
</dbReference>
<dbReference type="ExpressionAtlas" id="Q9ZVD3">
    <property type="expression patterns" value="baseline"/>
</dbReference>
<dbReference type="GO" id="GO:0005634">
    <property type="term" value="C:nucleus"/>
    <property type="evidence" value="ECO:0007669"/>
    <property type="project" value="UniProtKB-SubCell"/>
</dbReference>
<dbReference type="GO" id="GO:0003677">
    <property type="term" value="F:DNA binding"/>
    <property type="evidence" value="ECO:0007669"/>
    <property type="project" value="UniProtKB-KW"/>
</dbReference>
<dbReference type="GO" id="GO:0003700">
    <property type="term" value="F:DNA-binding transcription factor activity"/>
    <property type="evidence" value="ECO:0007669"/>
    <property type="project" value="InterPro"/>
</dbReference>
<dbReference type="GO" id="GO:0009736">
    <property type="term" value="P:cytokinin-activated signaling pathway"/>
    <property type="evidence" value="ECO:0007669"/>
    <property type="project" value="UniProtKB-KW"/>
</dbReference>
<dbReference type="GO" id="GO:0000160">
    <property type="term" value="P:phosphorelay signal transduction system"/>
    <property type="evidence" value="ECO:0007669"/>
    <property type="project" value="UniProtKB-KW"/>
</dbReference>
<dbReference type="CDD" id="cd00156">
    <property type="entry name" value="REC"/>
    <property type="match status" value="1"/>
</dbReference>
<dbReference type="FunFam" id="1.10.10.60:FF:000007">
    <property type="entry name" value="Two-component response regulator"/>
    <property type="match status" value="1"/>
</dbReference>
<dbReference type="Gene3D" id="3.40.50.2300">
    <property type="match status" value="1"/>
</dbReference>
<dbReference type="Gene3D" id="1.10.10.60">
    <property type="entry name" value="Homeodomain-like"/>
    <property type="match status" value="1"/>
</dbReference>
<dbReference type="InterPro" id="IPR045279">
    <property type="entry name" value="ARR-like"/>
</dbReference>
<dbReference type="InterPro" id="IPR011006">
    <property type="entry name" value="CheY-like_superfamily"/>
</dbReference>
<dbReference type="InterPro" id="IPR009057">
    <property type="entry name" value="Homeodomain-like_sf"/>
</dbReference>
<dbReference type="InterPro" id="IPR006447">
    <property type="entry name" value="Myb_dom_plants"/>
</dbReference>
<dbReference type="InterPro" id="IPR017053">
    <property type="entry name" value="Response_reg_B-typ_pln"/>
</dbReference>
<dbReference type="InterPro" id="IPR001789">
    <property type="entry name" value="Sig_transdc_resp-reg_receiver"/>
</dbReference>
<dbReference type="NCBIfam" id="TIGR01557">
    <property type="entry name" value="myb_SHAQKYF"/>
    <property type="match status" value="1"/>
</dbReference>
<dbReference type="PANTHER" id="PTHR43874:SF19">
    <property type="entry name" value="RESPONSE REGULATOR 23-RELATED"/>
    <property type="match status" value="1"/>
</dbReference>
<dbReference type="PANTHER" id="PTHR43874">
    <property type="entry name" value="TWO-COMPONENT RESPONSE REGULATOR"/>
    <property type="match status" value="1"/>
</dbReference>
<dbReference type="Pfam" id="PF00072">
    <property type="entry name" value="Response_reg"/>
    <property type="match status" value="1"/>
</dbReference>
<dbReference type="PIRSF" id="PIRSF036392">
    <property type="entry name" value="RR_ARR_type-B"/>
    <property type="match status" value="1"/>
</dbReference>
<dbReference type="SMART" id="SM00448">
    <property type="entry name" value="REC"/>
    <property type="match status" value="1"/>
</dbReference>
<dbReference type="SUPFAM" id="SSF52172">
    <property type="entry name" value="CheY-like"/>
    <property type="match status" value="1"/>
</dbReference>
<dbReference type="SUPFAM" id="SSF46689">
    <property type="entry name" value="Homeodomain-like"/>
    <property type="match status" value="1"/>
</dbReference>
<dbReference type="PROSITE" id="PS50110">
    <property type="entry name" value="RESPONSE_REGULATORY"/>
    <property type="match status" value="1"/>
</dbReference>
<accession>Q9ZVD3</accession>
<accession>F4IVP4</accession>
<comment type="function">
    <text evidence="1">Putative transcriptional activator that binds specifically to the DNA sequence 5'-[AG]GATT-3'. Functions as a response regulator involved in His-to-Asp phosphorelay signal transduction system. Phosphorylation of the Asp residue in the receiver domain activates the ability of the protein to promote the transcription of target genes. Could directly activate some type-A response regulators in response to cytokinins (By similarity).</text>
</comment>
<comment type="subunit">
    <text evidence="1">Binds the target DNA as a monomer.</text>
</comment>
<comment type="subcellular location">
    <subcellularLocation>
        <location>Nucleus</location>
    </subcellularLocation>
</comment>
<comment type="PTM">
    <text>Two-component system major event consists of a His-to-Asp phosphorelay between a sensor histidine kinase (HK) and a response regulator (RR). In plants, the His-to-Asp phosphorelay involves an additional intermediate named Histidine-containing phosphotransfer protein (HPt). This multistep phosphorelay consists of a His-Asp-His-Asp sequential transfer of a phosphate group between first a His and an Asp of the HK protein, followed by the transfer to a conserved His of the HPt protein and finally the transfer to an Asp in the receiver domain of the RR protein.</text>
</comment>
<comment type="similarity">
    <text evidence="5">Belongs to the ARR family. Type-B subfamily.</text>
</comment>
<comment type="sequence caution" evidence="5">
    <conflict type="erroneous gene model prediction">
        <sequence resource="EMBL-CDS" id="AAC77865"/>
    </conflict>
</comment>
<protein>
    <recommendedName>
        <fullName>Putative two-component response regulator ARR13</fullName>
    </recommendedName>
</protein>
<organism>
    <name type="scientific">Arabidopsis thaliana</name>
    <name type="common">Mouse-ear cress</name>
    <dbReference type="NCBI Taxonomy" id="3702"/>
    <lineage>
        <taxon>Eukaryota</taxon>
        <taxon>Viridiplantae</taxon>
        <taxon>Streptophyta</taxon>
        <taxon>Embryophyta</taxon>
        <taxon>Tracheophyta</taxon>
        <taxon>Spermatophyta</taxon>
        <taxon>Magnoliopsida</taxon>
        <taxon>eudicotyledons</taxon>
        <taxon>Gunneridae</taxon>
        <taxon>Pentapetalae</taxon>
        <taxon>rosids</taxon>
        <taxon>malvids</taxon>
        <taxon>Brassicales</taxon>
        <taxon>Brassicaceae</taxon>
        <taxon>Camelineae</taxon>
        <taxon>Arabidopsis</taxon>
    </lineage>
</organism>
<keyword id="KW-0010">Activator</keyword>
<keyword id="KW-0932">Cytokinin signaling pathway</keyword>
<keyword id="KW-0238">DNA-binding</keyword>
<keyword id="KW-0539">Nucleus</keyword>
<keyword id="KW-0597">Phosphoprotein</keyword>
<keyword id="KW-1185">Reference proteome</keyword>
<keyword id="KW-0804">Transcription</keyword>
<keyword id="KW-0805">Transcription regulation</keyword>
<keyword id="KW-0902">Two-component regulatory system</keyword>
<feature type="chain" id="PRO_0000132298" description="Putative two-component response regulator ARR13">
    <location>
        <begin position="1"/>
        <end position="572"/>
    </location>
</feature>
<feature type="domain" description="Response regulatory" evidence="3">
    <location>
        <begin position="17"/>
        <end position="134"/>
    </location>
</feature>
<feature type="DNA-binding region" description="Myb-like GARP">
    <location>
        <begin position="227"/>
        <end position="277"/>
    </location>
</feature>
<feature type="region of interest" description="Disordered" evidence="4">
    <location>
        <begin position="175"/>
        <end position="225"/>
    </location>
</feature>
<feature type="region of interest" description="Disordered" evidence="4">
    <location>
        <begin position="509"/>
        <end position="531"/>
    </location>
</feature>
<feature type="short sequence motif" description="Nuclear localization signal" evidence="2">
    <location>
        <begin position="224"/>
        <end position="227"/>
    </location>
</feature>
<feature type="compositionally biased region" description="Polar residues" evidence="4">
    <location>
        <begin position="179"/>
        <end position="197"/>
    </location>
</feature>
<feature type="compositionally biased region" description="Polar residues" evidence="4">
    <location>
        <begin position="509"/>
        <end position="522"/>
    </location>
</feature>
<feature type="modified residue" description="4-aspartylphosphate" evidence="3">
    <location>
        <position position="71"/>
    </location>
</feature>
<gene>
    <name type="primary">ARR13</name>
    <name type="ordered locus">At2g27070</name>
    <name type="ORF">T20P8.12</name>
</gene>
<evidence type="ECO:0000250" key="1"/>
<evidence type="ECO:0000255" key="2"/>
<evidence type="ECO:0000255" key="3">
    <source>
        <dbReference type="PROSITE-ProRule" id="PRU00169"/>
    </source>
</evidence>
<evidence type="ECO:0000256" key="4">
    <source>
        <dbReference type="SAM" id="MobiDB-lite"/>
    </source>
</evidence>
<evidence type="ECO:0000305" key="5"/>
<name>ARR13_ARATH</name>
<proteinExistence type="inferred from homology"/>
<sequence>MAFAQSVYNQSSVLKINVMVVDDNRVFLDIWSRMLEKSKYREITVIAVDYPKKALSTLKNQRDNIDLIITDYYMPGMNGLQLKKQITQEFGNLSVLVMSSDPNKEEESLSCGAMGFIPKPIAPTDLPKIYQFALTYKRNGKSTLSTEQNQKDANVSVPQQIMLVPEQAYVLKTKKKNCSSKSDTRTVNSTNVSHVSTNGSRKNRKRKPKGGPSDDGESLSQPPKKKKIWWTNPLQDLFLQAIQHIGYDKVVPKKILAIMNVPYLTRENVASHLQKYRLFVKRVVHQGRFSMLSDRGKDSMFRQTHIKEPYVNYYTPSTSWYETSLNNRSFYSESVHGHSRLLSEAREPVRYNQMSYNYMNRNISFENQPSQNEETRTVFEPPVMANKISQTSQVLGFGQLGPSAISGHNFNTNMMSSYGSLTPNQPGTSHFSYGMQSVLNNENATYNPQPPANATTQPNLDELPQLENLNLYNDLGNTSELPYNISNFQSDDNKKQGEEDGDWTFVNINQDQSNGESSNTIATPETNTPNFNINPNQNQGQAVPEFTDWSFLDQQELVDDDFMNSLFNNDMN</sequence>
<reference key="1">
    <citation type="journal article" date="1999" name="Nature">
        <title>Sequence and analysis of chromosome 2 of the plant Arabidopsis thaliana.</title>
        <authorList>
            <person name="Lin X."/>
            <person name="Kaul S."/>
            <person name="Rounsley S.D."/>
            <person name="Shea T.P."/>
            <person name="Benito M.-I."/>
            <person name="Town C.D."/>
            <person name="Fujii C.Y."/>
            <person name="Mason T.M."/>
            <person name="Bowman C.L."/>
            <person name="Barnstead M.E."/>
            <person name="Feldblyum T.V."/>
            <person name="Buell C.R."/>
            <person name="Ketchum K.A."/>
            <person name="Lee J.J."/>
            <person name="Ronning C.M."/>
            <person name="Koo H.L."/>
            <person name="Moffat K.S."/>
            <person name="Cronin L.A."/>
            <person name="Shen M."/>
            <person name="Pai G."/>
            <person name="Van Aken S."/>
            <person name="Umayam L."/>
            <person name="Tallon L.J."/>
            <person name="Gill J.E."/>
            <person name="Adams M.D."/>
            <person name="Carrera A.J."/>
            <person name="Creasy T.H."/>
            <person name="Goodman H.M."/>
            <person name="Somerville C.R."/>
            <person name="Copenhaver G.P."/>
            <person name="Preuss D."/>
            <person name="Nierman W.C."/>
            <person name="White O."/>
            <person name="Eisen J.A."/>
            <person name="Salzberg S.L."/>
            <person name="Fraser C.M."/>
            <person name="Venter J.C."/>
        </authorList>
    </citation>
    <scope>NUCLEOTIDE SEQUENCE [LARGE SCALE GENOMIC DNA]</scope>
    <source>
        <strain>cv. Columbia</strain>
    </source>
</reference>
<reference key="2">
    <citation type="journal article" date="2017" name="Plant J.">
        <title>Araport11: a complete reannotation of the Arabidopsis thaliana reference genome.</title>
        <authorList>
            <person name="Cheng C.Y."/>
            <person name="Krishnakumar V."/>
            <person name="Chan A.P."/>
            <person name="Thibaud-Nissen F."/>
            <person name="Schobel S."/>
            <person name="Town C.D."/>
        </authorList>
    </citation>
    <scope>GENOME REANNOTATION</scope>
    <source>
        <strain>cv. Columbia</strain>
    </source>
</reference>